<protein>
    <recommendedName>
        <fullName>Olfactory receptor 4D2</fullName>
    </recommendedName>
    <alternativeName>
        <fullName>B-lymphocyte membrane protein BC2009</fullName>
    </alternativeName>
    <alternativeName>
        <fullName>Olfactory receptor OR17-24</fullName>
    </alternativeName>
</protein>
<comment type="function">
    <text evidence="3">Odorant receptor.</text>
</comment>
<comment type="subcellular location">
    <subcellularLocation>
        <location>Cell membrane</location>
        <topology>Multi-pass membrane protein</topology>
    </subcellularLocation>
</comment>
<comment type="similarity">
    <text evidence="2">Belongs to the G-protein coupled receptor 1 family.</text>
</comment>
<comment type="online information" name="Human Olfactory Receptor Data Exploratorium (HORDE)">
    <link uri="http://genome.weizmann.ac.il/horde/card/index/symbol:OR4D2"/>
</comment>
<gene>
    <name type="primary">OR4D2</name>
</gene>
<keyword id="KW-1003">Cell membrane</keyword>
<keyword id="KW-1015">Disulfide bond</keyword>
<keyword id="KW-0297">G-protein coupled receptor</keyword>
<keyword id="KW-0325">Glycoprotein</keyword>
<keyword id="KW-0472">Membrane</keyword>
<keyword id="KW-0552">Olfaction</keyword>
<keyword id="KW-0675">Receptor</keyword>
<keyword id="KW-1185">Reference proteome</keyword>
<keyword id="KW-0716">Sensory transduction</keyword>
<keyword id="KW-0807">Transducer</keyword>
<keyword id="KW-0812">Transmembrane</keyword>
<keyword id="KW-1133">Transmembrane helix</keyword>
<feature type="chain" id="PRO_0000150538" description="Olfactory receptor 4D2">
    <location>
        <begin position="1"/>
        <end position="307"/>
    </location>
</feature>
<feature type="topological domain" description="Extracellular" evidence="1">
    <location>
        <begin position="1"/>
        <end position="25"/>
    </location>
</feature>
<feature type="transmembrane region" description="Helical; Name=1" evidence="1">
    <location>
        <begin position="26"/>
        <end position="49"/>
    </location>
</feature>
<feature type="topological domain" description="Cytoplasmic" evidence="1">
    <location>
        <begin position="50"/>
        <end position="57"/>
    </location>
</feature>
<feature type="transmembrane region" description="Helical; Name=2" evidence="1">
    <location>
        <begin position="58"/>
        <end position="79"/>
    </location>
</feature>
<feature type="topological domain" description="Extracellular" evidence="1">
    <location>
        <begin position="80"/>
        <end position="100"/>
    </location>
</feature>
<feature type="transmembrane region" description="Helical; Name=3" evidence="1">
    <location>
        <begin position="101"/>
        <end position="120"/>
    </location>
</feature>
<feature type="topological domain" description="Cytoplasmic" evidence="1">
    <location>
        <begin position="121"/>
        <end position="139"/>
    </location>
</feature>
<feature type="transmembrane region" description="Helical; Name=4" evidence="1">
    <location>
        <begin position="140"/>
        <end position="158"/>
    </location>
</feature>
<feature type="topological domain" description="Extracellular" evidence="1">
    <location>
        <begin position="159"/>
        <end position="195"/>
    </location>
</feature>
<feature type="transmembrane region" description="Helical; Name=5" evidence="1">
    <location>
        <begin position="196"/>
        <end position="219"/>
    </location>
</feature>
<feature type="topological domain" description="Cytoplasmic" evidence="1">
    <location>
        <begin position="220"/>
        <end position="235"/>
    </location>
</feature>
<feature type="transmembrane region" description="Helical; Name=6" evidence="1">
    <location>
        <begin position="236"/>
        <end position="258"/>
    </location>
</feature>
<feature type="topological domain" description="Extracellular" evidence="1">
    <location>
        <begin position="259"/>
        <end position="269"/>
    </location>
</feature>
<feature type="transmembrane region" description="Helical; Name=7" evidence="1">
    <location>
        <begin position="270"/>
        <end position="289"/>
    </location>
</feature>
<feature type="topological domain" description="Cytoplasmic" evidence="1">
    <location>
        <begin position="290"/>
        <end position="307"/>
    </location>
</feature>
<feature type="glycosylation site" description="N-linked (GlcNAc...) asparagine" evidence="1">
    <location>
        <position position="5"/>
    </location>
</feature>
<feature type="disulfide bond" evidence="2">
    <location>
        <begin position="97"/>
        <end position="189"/>
    </location>
</feature>
<feature type="sequence variant" id="VAR_062035" description="In dbSNP:rs60994383.">
    <original>L</original>
    <variation>I</variation>
    <location>
        <position position="29"/>
    </location>
</feature>
<reference key="1">
    <citation type="submission" date="2000-09" db="EMBL/GenBank/DDBJ databases">
        <title>Activated B lymphocyte gene.</title>
        <authorList>
            <person name="Lu X.-W."/>
            <person name="Cui L.-X."/>
            <person name="Li Y.-H."/>
        </authorList>
    </citation>
    <scope>NUCLEOTIDE SEQUENCE [MRNA]</scope>
</reference>
<reference key="2">
    <citation type="submission" date="2001-07" db="EMBL/GenBank/DDBJ databases">
        <title>Genome-wide discovery and analysis of human seven transmembrane helix receptor genes.</title>
        <authorList>
            <person name="Suwa M."/>
            <person name="Sato T."/>
            <person name="Okouchi I."/>
            <person name="Arita M."/>
            <person name="Futami K."/>
            <person name="Matsumoto S."/>
            <person name="Tsutsumi S."/>
            <person name="Aburatani H."/>
            <person name="Asai K."/>
            <person name="Akiyama Y."/>
        </authorList>
    </citation>
    <scope>NUCLEOTIDE SEQUENCE [GENOMIC DNA]</scope>
</reference>
<reference key="3">
    <citation type="journal article" date="2006" name="Nature">
        <title>DNA sequence of human chromosome 17 and analysis of rearrangement in the human lineage.</title>
        <authorList>
            <person name="Zody M.C."/>
            <person name="Garber M."/>
            <person name="Adams D.J."/>
            <person name="Sharpe T."/>
            <person name="Harrow J."/>
            <person name="Lupski J.R."/>
            <person name="Nicholson C."/>
            <person name="Searle S.M."/>
            <person name="Wilming L."/>
            <person name="Young S.K."/>
            <person name="Abouelleil A."/>
            <person name="Allen N.R."/>
            <person name="Bi W."/>
            <person name="Bloom T."/>
            <person name="Borowsky M.L."/>
            <person name="Bugalter B.E."/>
            <person name="Butler J."/>
            <person name="Chang J.L."/>
            <person name="Chen C.-K."/>
            <person name="Cook A."/>
            <person name="Corum B."/>
            <person name="Cuomo C.A."/>
            <person name="de Jong P.J."/>
            <person name="DeCaprio D."/>
            <person name="Dewar K."/>
            <person name="FitzGerald M."/>
            <person name="Gilbert J."/>
            <person name="Gibson R."/>
            <person name="Gnerre S."/>
            <person name="Goldstein S."/>
            <person name="Grafham D.V."/>
            <person name="Grocock R."/>
            <person name="Hafez N."/>
            <person name="Hagopian D.S."/>
            <person name="Hart E."/>
            <person name="Norman C.H."/>
            <person name="Humphray S."/>
            <person name="Jaffe D.B."/>
            <person name="Jones M."/>
            <person name="Kamal M."/>
            <person name="Khodiyar V.K."/>
            <person name="LaButti K."/>
            <person name="Laird G."/>
            <person name="Lehoczky J."/>
            <person name="Liu X."/>
            <person name="Lokyitsang T."/>
            <person name="Loveland J."/>
            <person name="Lui A."/>
            <person name="Macdonald P."/>
            <person name="Major J.E."/>
            <person name="Matthews L."/>
            <person name="Mauceli E."/>
            <person name="McCarroll S.A."/>
            <person name="Mihalev A.H."/>
            <person name="Mudge J."/>
            <person name="Nguyen C."/>
            <person name="Nicol R."/>
            <person name="O'Leary S.B."/>
            <person name="Osoegawa K."/>
            <person name="Schwartz D.C."/>
            <person name="Shaw-Smith C."/>
            <person name="Stankiewicz P."/>
            <person name="Steward C."/>
            <person name="Swarbreck D."/>
            <person name="Venkataraman V."/>
            <person name="Whittaker C.A."/>
            <person name="Yang X."/>
            <person name="Zimmer A.R."/>
            <person name="Bradley A."/>
            <person name="Hubbard T."/>
            <person name="Birren B.W."/>
            <person name="Rogers J."/>
            <person name="Lander E.S."/>
            <person name="Nusbaum C."/>
        </authorList>
    </citation>
    <scope>NUCLEOTIDE SEQUENCE [LARGE SCALE GENOMIC DNA]</scope>
</reference>
<reference key="4">
    <citation type="journal article" date="2002" name="Genomics">
        <title>DEFOG: a practical scheme for deciphering families of genes.</title>
        <authorList>
            <person name="Fuchs T."/>
            <person name="Malecova B."/>
            <person name="Linhart C."/>
            <person name="Sharan R."/>
            <person name="Khen M."/>
            <person name="Herwig R."/>
            <person name="Shmulevich D."/>
            <person name="Elkon R."/>
            <person name="Steinfath M."/>
            <person name="O'Brien J.K."/>
            <person name="Radelof U."/>
            <person name="Lehrach H."/>
            <person name="Lancet D."/>
            <person name="Shamir R."/>
        </authorList>
    </citation>
    <scope>NUCLEOTIDE SEQUENCE [GENOMIC DNA] OF 68-280</scope>
</reference>
<reference key="5">
    <citation type="journal article" date="2004" name="Proc. Natl. Acad. Sci. U.S.A.">
        <title>The human olfactory receptor gene family.</title>
        <authorList>
            <person name="Malnic B."/>
            <person name="Godfrey P.A."/>
            <person name="Buck L.B."/>
        </authorList>
    </citation>
    <scope>IDENTIFICATION</scope>
</reference>
<reference key="6">
    <citation type="journal article" date="2004" name="Proc. Natl. Acad. Sci. U.S.A.">
        <authorList>
            <person name="Malnic B."/>
            <person name="Godfrey P.A."/>
            <person name="Buck L.B."/>
        </authorList>
    </citation>
    <scope>ERRATUM OF PUBMED:14983052</scope>
</reference>
<dbReference type="EMBL" id="AF303373">
    <property type="protein sequence ID" value="AAL26785.1"/>
    <property type="molecule type" value="mRNA"/>
</dbReference>
<dbReference type="EMBL" id="AB065912">
    <property type="protein sequence ID" value="BAC06127.1"/>
    <property type="molecule type" value="Genomic_DNA"/>
</dbReference>
<dbReference type="EMBL" id="AC005962">
    <property type="status" value="NOT_ANNOTATED_CDS"/>
    <property type="molecule type" value="Genomic_DNA"/>
</dbReference>
<dbReference type="EMBL" id="AF399568">
    <property type="protein sequence ID" value="AAK95053.1"/>
    <property type="molecule type" value="Genomic_DNA"/>
</dbReference>
<dbReference type="EMBL" id="BK004224">
    <property type="protein sequence ID" value="DAA04622.1"/>
    <property type="molecule type" value="Genomic_DNA"/>
</dbReference>
<dbReference type="CCDS" id="CCDS32688.1"/>
<dbReference type="RefSeq" id="NP_001004707.1">
    <property type="nucleotide sequence ID" value="NM_001004707.4"/>
</dbReference>
<dbReference type="SMR" id="P58180"/>
<dbReference type="BioGRID" id="125872">
    <property type="interactions" value="23"/>
</dbReference>
<dbReference type="FunCoup" id="P58180">
    <property type="interactions" value="468"/>
</dbReference>
<dbReference type="IntAct" id="P58180">
    <property type="interactions" value="3"/>
</dbReference>
<dbReference type="STRING" id="9606.ENSP00000493137"/>
<dbReference type="GlyCosmos" id="P58180">
    <property type="glycosylation" value="1 site, No reported glycans"/>
</dbReference>
<dbReference type="GlyGen" id="P58180">
    <property type="glycosylation" value="1 site"/>
</dbReference>
<dbReference type="iPTMnet" id="P58180"/>
<dbReference type="PhosphoSitePlus" id="P58180"/>
<dbReference type="BioMuta" id="OR4D2"/>
<dbReference type="DMDM" id="14423786"/>
<dbReference type="jPOST" id="P58180"/>
<dbReference type="PaxDb" id="9606-ENSP00000441354"/>
<dbReference type="Antibodypedia" id="65981">
    <property type="antibodies" value="70 antibodies from 18 providers"/>
</dbReference>
<dbReference type="DNASU" id="124538"/>
<dbReference type="Ensembl" id="ENST00000545221.2">
    <property type="protein sequence ID" value="ENSP00000441354.1"/>
    <property type="gene ID" value="ENSG00000255713.2"/>
</dbReference>
<dbReference type="Ensembl" id="ENST00000641866.1">
    <property type="protein sequence ID" value="ENSP00000493137.1"/>
    <property type="gene ID" value="ENSG00000255713.2"/>
</dbReference>
<dbReference type="GeneID" id="124538"/>
<dbReference type="KEGG" id="hsa:124538"/>
<dbReference type="MANE-Select" id="ENST00000545221.2">
    <property type="protein sequence ID" value="ENSP00000441354.1"/>
    <property type="RefSeq nucleotide sequence ID" value="NM_001004707.4"/>
    <property type="RefSeq protein sequence ID" value="NP_001004707.1"/>
</dbReference>
<dbReference type="UCSC" id="uc010wnp.2">
    <property type="organism name" value="human"/>
</dbReference>
<dbReference type="AGR" id="HGNC:8294"/>
<dbReference type="CTD" id="124538"/>
<dbReference type="GeneCards" id="OR4D2"/>
<dbReference type="HGNC" id="HGNC:8294">
    <property type="gene designation" value="OR4D2"/>
</dbReference>
<dbReference type="HPA" id="ENSG00000255713">
    <property type="expression patterns" value="Not detected"/>
</dbReference>
<dbReference type="neXtProt" id="NX_P58180"/>
<dbReference type="OpenTargets" id="ENSG00000255713"/>
<dbReference type="PharmGKB" id="PA32270"/>
<dbReference type="VEuPathDB" id="HostDB:ENSG00000255713"/>
<dbReference type="eggNOG" id="ENOG502SIBY">
    <property type="taxonomic scope" value="Eukaryota"/>
</dbReference>
<dbReference type="GeneTree" id="ENSGT00940000154503"/>
<dbReference type="HOGENOM" id="CLU_012526_8_1_1"/>
<dbReference type="InParanoid" id="P58180"/>
<dbReference type="OMA" id="IYQLALM"/>
<dbReference type="OrthoDB" id="5970632at2759"/>
<dbReference type="PAN-GO" id="P58180">
    <property type="GO annotations" value="2 GO annotations based on evolutionary models"/>
</dbReference>
<dbReference type="PhylomeDB" id="P58180"/>
<dbReference type="TreeFam" id="TF338273"/>
<dbReference type="PathwayCommons" id="P58180"/>
<dbReference type="Reactome" id="R-HSA-381753">
    <property type="pathway name" value="Olfactory Signaling Pathway"/>
</dbReference>
<dbReference type="Reactome" id="R-HSA-9752946">
    <property type="pathway name" value="Expression and translocation of olfactory receptors"/>
</dbReference>
<dbReference type="BioGRID-ORCS" id="124538">
    <property type="hits" value="7 hits in 739 CRISPR screens"/>
</dbReference>
<dbReference type="GeneWiki" id="OR4D2"/>
<dbReference type="GenomeRNAi" id="124538"/>
<dbReference type="Pharos" id="P58180">
    <property type="development level" value="Tdark"/>
</dbReference>
<dbReference type="PRO" id="PR:P58180"/>
<dbReference type="Proteomes" id="UP000005640">
    <property type="component" value="Chromosome 17"/>
</dbReference>
<dbReference type="RNAct" id="P58180">
    <property type="molecule type" value="protein"/>
</dbReference>
<dbReference type="ExpressionAtlas" id="P58180">
    <property type="expression patterns" value="baseline and differential"/>
</dbReference>
<dbReference type="GO" id="GO:0005886">
    <property type="term" value="C:plasma membrane"/>
    <property type="evidence" value="ECO:0000318"/>
    <property type="project" value="GO_Central"/>
</dbReference>
<dbReference type="GO" id="GO:0004930">
    <property type="term" value="F:G protein-coupled receptor activity"/>
    <property type="evidence" value="ECO:0007669"/>
    <property type="project" value="UniProtKB-KW"/>
</dbReference>
<dbReference type="GO" id="GO:0004984">
    <property type="term" value="F:olfactory receptor activity"/>
    <property type="evidence" value="ECO:0000318"/>
    <property type="project" value="GO_Central"/>
</dbReference>
<dbReference type="CDD" id="cd15936">
    <property type="entry name" value="7tmA_OR4D-like"/>
    <property type="match status" value="1"/>
</dbReference>
<dbReference type="FunFam" id="1.20.1070.10:FF:000007">
    <property type="entry name" value="Olfactory receptor"/>
    <property type="match status" value="1"/>
</dbReference>
<dbReference type="Gene3D" id="1.20.1070.10">
    <property type="entry name" value="Rhodopsin 7-helix transmembrane proteins"/>
    <property type="match status" value="1"/>
</dbReference>
<dbReference type="InterPro" id="IPR000276">
    <property type="entry name" value="GPCR_Rhodpsn"/>
</dbReference>
<dbReference type="InterPro" id="IPR017452">
    <property type="entry name" value="GPCR_Rhodpsn_7TM"/>
</dbReference>
<dbReference type="InterPro" id="IPR000725">
    <property type="entry name" value="Olfact_rcpt"/>
</dbReference>
<dbReference type="InterPro" id="IPR050427">
    <property type="entry name" value="Olfactory_Receptors"/>
</dbReference>
<dbReference type="PANTHER" id="PTHR48002">
    <property type="entry name" value="OLFACTORY RECEPTOR"/>
    <property type="match status" value="1"/>
</dbReference>
<dbReference type="Pfam" id="PF13853">
    <property type="entry name" value="7tm_4"/>
    <property type="match status" value="1"/>
</dbReference>
<dbReference type="PRINTS" id="PR00237">
    <property type="entry name" value="GPCRRHODOPSN"/>
</dbReference>
<dbReference type="PRINTS" id="PR00245">
    <property type="entry name" value="OLFACTORYR"/>
</dbReference>
<dbReference type="SUPFAM" id="SSF81321">
    <property type="entry name" value="Family A G protein-coupled receptor-like"/>
    <property type="match status" value="1"/>
</dbReference>
<dbReference type="PROSITE" id="PS50262">
    <property type="entry name" value="G_PROTEIN_RECEP_F1_2"/>
    <property type="match status" value="1"/>
</dbReference>
<accession>P58180</accession>
<accession>Q6IFN8</accession>
<accession>Q96R75</accession>
<organism>
    <name type="scientific">Homo sapiens</name>
    <name type="common">Human</name>
    <dbReference type="NCBI Taxonomy" id="9606"/>
    <lineage>
        <taxon>Eukaryota</taxon>
        <taxon>Metazoa</taxon>
        <taxon>Chordata</taxon>
        <taxon>Craniata</taxon>
        <taxon>Vertebrata</taxon>
        <taxon>Euteleostomi</taxon>
        <taxon>Mammalia</taxon>
        <taxon>Eutheria</taxon>
        <taxon>Euarchontoglires</taxon>
        <taxon>Primates</taxon>
        <taxon>Haplorrhini</taxon>
        <taxon>Catarrhini</taxon>
        <taxon>Hominidae</taxon>
        <taxon>Homo</taxon>
    </lineage>
</organism>
<sequence length="307" mass="34958">METGNLTWVSDFVFLGLSQTRELQRFLFLMFLFVYITTVMGNILIIITVTSDSQLHTPMYFLLRNLAVLDLCFSSVTAPKMLVDLLSEKKTISYQGCMGQIFFFHFLGGAMVFFLSVMAFDRLIAISRPLRYVTVMNTQLWVGLVVATWVGGFVHSIVQLALMLPLPFCGPNILDNFYCDVPQVLRLACTDTSLLEFLKISNSGLLDVVWFFLLLMSYLFILVMLRSHPGEARRKAASTCTTHIIVVSMIFVPSIYLYARPFTPFPMDKLVSIGHTVMTPMLNPMIYTLRNQDMQAAVRRLGRHRLV</sequence>
<proteinExistence type="evidence at transcript level"/>
<evidence type="ECO:0000255" key="1"/>
<evidence type="ECO:0000255" key="2">
    <source>
        <dbReference type="PROSITE-ProRule" id="PRU00521"/>
    </source>
</evidence>
<evidence type="ECO:0000305" key="3"/>
<name>OR4D2_HUMAN</name>